<gene>
    <name evidence="1" type="primary">pepA</name>
    <name type="ordered locus">SPC_4610</name>
</gene>
<organism>
    <name type="scientific">Salmonella paratyphi C (strain RKS4594)</name>
    <dbReference type="NCBI Taxonomy" id="476213"/>
    <lineage>
        <taxon>Bacteria</taxon>
        <taxon>Pseudomonadati</taxon>
        <taxon>Pseudomonadota</taxon>
        <taxon>Gammaproteobacteria</taxon>
        <taxon>Enterobacterales</taxon>
        <taxon>Enterobacteriaceae</taxon>
        <taxon>Salmonella</taxon>
    </lineage>
</organism>
<dbReference type="EC" id="3.4.11.1" evidence="1"/>
<dbReference type="EC" id="3.4.11.10" evidence="1"/>
<dbReference type="EMBL" id="CP000857">
    <property type="protein sequence ID" value="ACN48659.1"/>
    <property type="molecule type" value="Genomic_DNA"/>
</dbReference>
<dbReference type="RefSeq" id="WP_000397158.1">
    <property type="nucleotide sequence ID" value="NC_012125.1"/>
</dbReference>
<dbReference type="SMR" id="C0Q7D6"/>
<dbReference type="MEROPS" id="M17.003"/>
<dbReference type="KEGG" id="sei:SPC_4610"/>
<dbReference type="HOGENOM" id="CLU_013734_2_2_6"/>
<dbReference type="Proteomes" id="UP000001599">
    <property type="component" value="Chromosome"/>
</dbReference>
<dbReference type="GO" id="GO:0005737">
    <property type="term" value="C:cytoplasm"/>
    <property type="evidence" value="ECO:0007669"/>
    <property type="project" value="UniProtKB-SubCell"/>
</dbReference>
<dbReference type="GO" id="GO:0030145">
    <property type="term" value="F:manganese ion binding"/>
    <property type="evidence" value="ECO:0007669"/>
    <property type="project" value="UniProtKB-UniRule"/>
</dbReference>
<dbReference type="GO" id="GO:0070006">
    <property type="term" value="F:metalloaminopeptidase activity"/>
    <property type="evidence" value="ECO:0007669"/>
    <property type="project" value="InterPro"/>
</dbReference>
<dbReference type="GO" id="GO:0006508">
    <property type="term" value="P:proteolysis"/>
    <property type="evidence" value="ECO:0007669"/>
    <property type="project" value="UniProtKB-KW"/>
</dbReference>
<dbReference type="CDD" id="cd00433">
    <property type="entry name" value="Peptidase_M17"/>
    <property type="match status" value="1"/>
</dbReference>
<dbReference type="FunFam" id="3.40.220.10:FF:000001">
    <property type="entry name" value="Probable cytosol aminopeptidase"/>
    <property type="match status" value="1"/>
</dbReference>
<dbReference type="FunFam" id="3.40.630.10:FF:000004">
    <property type="entry name" value="Probable cytosol aminopeptidase"/>
    <property type="match status" value="1"/>
</dbReference>
<dbReference type="Gene3D" id="3.40.220.10">
    <property type="entry name" value="Leucine Aminopeptidase, subunit E, domain 1"/>
    <property type="match status" value="1"/>
</dbReference>
<dbReference type="Gene3D" id="3.40.630.10">
    <property type="entry name" value="Zn peptidases"/>
    <property type="match status" value="1"/>
</dbReference>
<dbReference type="HAMAP" id="MF_00181">
    <property type="entry name" value="Cytosol_peptidase_M17"/>
    <property type="match status" value="1"/>
</dbReference>
<dbReference type="InterPro" id="IPR011356">
    <property type="entry name" value="Leucine_aapep/pepB"/>
</dbReference>
<dbReference type="InterPro" id="IPR043472">
    <property type="entry name" value="Macro_dom-like"/>
</dbReference>
<dbReference type="InterPro" id="IPR000819">
    <property type="entry name" value="Peptidase_M17_C"/>
</dbReference>
<dbReference type="InterPro" id="IPR023042">
    <property type="entry name" value="Peptidase_M17_leu_NH2_pept"/>
</dbReference>
<dbReference type="InterPro" id="IPR008283">
    <property type="entry name" value="Peptidase_M17_N"/>
</dbReference>
<dbReference type="NCBIfam" id="NF002072">
    <property type="entry name" value="PRK00913.1-1"/>
    <property type="match status" value="1"/>
</dbReference>
<dbReference type="NCBIfam" id="NF002073">
    <property type="entry name" value="PRK00913.1-2"/>
    <property type="match status" value="1"/>
</dbReference>
<dbReference type="NCBIfam" id="NF002074">
    <property type="entry name" value="PRK00913.1-4"/>
    <property type="match status" value="1"/>
</dbReference>
<dbReference type="PANTHER" id="PTHR11963:SF23">
    <property type="entry name" value="CYTOSOL AMINOPEPTIDASE"/>
    <property type="match status" value="1"/>
</dbReference>
<dbReference type="PANTHER" id="PTHR11963">
    <property type="entry name" value="LEUCINE AMINOPEPTIDASE-RELATED"/>
    <property type="match status" value="1"/>
</dbReference>
<dbReference type="Pfam" id="PF00883">
    <property type="entry name" value="Peptidase_M17"/>
    <property type="match status" value="1"/>
</dbReference>
<dbReference type="Pfam" id="PF02789">
    <property type="entry name" value="Peptidase_M17_N"/>
    <property type="match status" value="1"/>
</dbReference>
<dbReference type="PRINTS" id="PR00481">
    <property type="entry name" value="LAMNOPPTDASE"/>
</dbReference>
<dbReference type="SUPFAM" id="SSF52949">
    <property type="entry name" value="Macro domain-like"/>
    <property type="match status" value="1"/>
</dbReference>
<dbReference type="SUPFAM" id="SSF53187">
    <property type="entry name" value="Zn-dependent exopeptidases"/>
    <property type="match status" value="1"/>
</dbReference>
<dbReference type="PROSITE" id="PS00631">
    <property type="entry name" value="CYTOSOL_AP"/>
    <property type="match status" value="1"/>
</dbReference>
<feature type="chain" id="PRO_1000192723" description="Probable cytosol aminopeptidase">
    <location>
        <begin position="1"/>
        <end position="503"/>
    </location>
</feature>
<feature type="active site" evidence="1">
    <location>
        <position position="282"/>
    </location>
</feature>
<feature type="active site" evidence="1">
    <location>
        <position position="356"/>
    </location>
</feature>
<feature type="binding site" evidence="1">
    <location>
        <position position="270"/>
    </location>
    <ligand>
        <name>Mn(2+)</name>
        <dbReference type="ChEBI" id="CHEBI:29035"/>
        <label>2</label>
    </ligand>
</feature>
<feature type="binding site" evidence="1">
    <location>
        <position position="275"/>
    </location>
    <ligand>
        <name>Mn(2+)</name>
        <dbReference type="ChEBI" id="CHEBI:29035"/>
        <label>1</label>
    </ligand>
</feature>
<feature type="binding site" evidence="1">
    <location>
        <position position="275"/>
    </location>
    <ligand>
        <name>Mn(2+)</name>
        <dbReference type="ChEBI" id="CHEBI:29035"/>
        <label>2</label>
    </ligand>
</feature>
<feature type="binding site" evidence="1">
    <location>
        <position position="293"/>
    </location>
    <ligand>
        <name>Mn(2+)</name>
        <dbReference type="ChEBI" id="CHEBI:29035"/>
        <label>2</label>
    </ligand>
</feature>
<feature type="binding site" evidence="1">
    <location>
        <position position="352"/>
    </location>
    <ligand>
        <name>Mn(2+)</name>
        <dbReference type="ChEBI" id="CHEBI:29035"/>
        <label>1</label>
    </ligand>
</feature>
<feature type="binding site" evidence="1">
    <location>
        <position position="354"/>
    </location>
    <ligand>
        <name>Mn(2+)</name>
        <dbReference type="ChEBI" id="CHEBI:29035"/>
        <label>1</label>
    </ligand>
</feature>
<feature type="binding site" evidence="1">
    <location>
        <position position="354"/>
    </location>
    <ligand>
        <name>Mn(2+)</name>
        <dbReference type="ChEBI" id="CHEBI:29035"/>
        <label>2</label>
    </ligand>
</feature>
<name>AMPA_SALPC</name>
<evidence type="ECO:0000255" key="1">
    <source>
        <dbReference type="HAMAP-Rule" id="MF_00181"/>
    </source>
</evidence>
<sequence>MEFSVKSGSPEKQRSACIVVGVFEPRRLSPIAEQLDKISDGYISALLRRGELEGKPGQTLLLHHVPNVLSERILLIGCGKERELDERQYKQVIQKTINTLNDTGSMEAVCFLTELHVKGRNNYWKVRQAVETAKETLYSFDQLKTNKSEPRRPLRKMVFNVPTRRELTSGERAIQHGLAIAAGIKAAKDLGNMPPNICNAAYLASQARQLADSYSKNVITRVIGEQQMRELGMNAYLAVGHGSQNESLMSVIEYKGNPSEDARPIVLVGKGLTFDSGGISIKPSEGMDEMKYDMCGAAAVYGVMRMVAELQLPINVIGVLAGCENMPGGRAYRPGDVLTTMSGQTVEVLNTDAEGRLVLCDVLTYVERFEPEAVIDVATLTGACVIALGHHITGLMSNHNPLAHELIGASEQAGDRAWRLPLGDEFQEQLESNFADMANIGGRPGGAITAGCFLSRFTRKYNWAHLDIAGTAWRSGKAKGATGRPVALLSQFLLNRAGFNGEE</sequence>
<accession>C0Q7D6</accession>
<comment type="function">
    <text evidence="1">Presumably involved in the processing and regular turnover of intracellular proteins. Catalyzes the removal of unsubstituted N-terminal amino acids from various peptides.</text>
</comment>
<comment type="catalytic activity">
    <reaction evidence="1">
        <text>Release of an N-terminal amino acid, Xaa-|-Yaa-, in which Xaa is preferably Leu, but may be other amino acids including Pro although not Arg or Lys, and Yaa may be Pro. Amino acid amides and methyl esters are also readily hydrolyzed, but rates on arylamides are exceedingly low.</text>
        <dbReference type="EC" id="3.4.11.1"/>
    </reaction>
</comment>
<comment type="catalytic activity">
    <reaction evidence="1">
        <text>Release of an N-terminal amino acid, preferentially leucine, but not glutamic or aspartic acids.</text>
        <dbReference type="EC" id="3.4.11.10"/>
    </reaction>
</comment>
<comment type="cofactor">
    <cofactor evidence="1">
        <name>Mn(2+)</name>
        <dbReference type="ChEBI" id="CHEBI:29035"/>
    </cofactor>
    <text evidence="1">Binds 2 manganese ions per subunit.</text>
</comment>
<comment type="subcellular location">
    <subcellularLocation>
        <location evidence="1">Cytoplasm</location>
    </subcellularLocation>
</comment>
<comment type="similarity">
    <text evidence="1">Belongs to the peptidase M17 family.</text>
</comment>
<keyword id="KW-0031">Aminopeptidase</keyword>
<keyword id="KW-0963">Cytoplasm</keyword>
<keyword id="KW-0378">Hydrolase</keyword>
<keyword id="KW-0464">Manganese</keyword>
<keyword id="KW-0479">Metal-binding</keyword>
<keyword id="KW-0645">Protease</keyword>
<proteinExistence type="inferred from homology"/>
<protein>
    <recommendedName>
        <fullName evidence="1">Probable cytosol aminopeptidase</fullName>
        <ecNumber evidence="1">3.4.11.1</ecNumber>
    </recommendedName>
    <alternativeName>
        <fullName evidence="1">Leucine aminopeptidase</fullName>
        <shortName evidence="1">LAP</shortName>
        <ecNumber evidence="1">3.4.11.10</ecNumber>
    </alternativeName>
    <alternativeName>
        <fullName evidence="1">Leucyl aminopeptidase</fullName>
    </alternativeName>
</protein>
<reference key="1">
    <citation type="journal article" date="2009" name="PLoS ONE">
        <title>Salmonella paratyphi C: genetic divergence from Salmonella choleraesuis and pathogenic convergence with Salmonella typhi.</title>
        <authorList>
            <person name="Liu W.-Q."/>
            <person name="Feng Y."/>
            <person name="Wang Y."/>
            <person name="Zou Q.-H."/>
            <person name="Chen F."/>
            <person name="Guo J.-T."/>
            <person name="Peng Y.-H."/>
            <person name="Jin Y."/>
            <person name="Li Y.-G."/>
            <person name="Hu S.-N."/>
            <person name="Johnston R.N."/>
            <person name="Liu G.-R."/>
            <person name="Liu S.-L."/>
        </authorList>
    </citation>
    <scope>NUCLEOTIDE SEQUENCE [LARGE SCALE GENOMIC DNA]</scope>
    <source>
        <strain>RKS4594</strain>
    </source>
</reference>